<dbReference type="EMBL" id="CP000305">
    <property type="protein sequence ID" value="ABG17416.1"/>
    <property type="molecule type" value="Genomic_DNA"/>
</dbReference>
<dbReference type="EMBL" id="ACNQ01000008">
    <property type="protein sequence ID" value="EEO77509.1"/>
    <property type="molecule type" value="Genomic_DNA"/>
</dbReference>
<dbReference type="SMR" id="Q1CKR4"/>
<dbReference type="KEGG" id="ypn:YPN_1085"/>
<dbReference type="HOGENOM" id="CLU_161438_2_1_6"/>
<dbReference type="Proteomes" id="UP000008936">
    <property type="component" value="Chromosome"/>
</dbReference>
<dbReference type="GO" id="GO:0005829">
    <property type="term" value="C:cytosol"/>
    <property type="evidence" value="ECO:0007669"/>
    <property type="project" value="TreeGrafter"/>
</dbReference>
<dbReference type="FunFam" id="3.30.70.260:FF:000002">
    <property type="entry name" value="UPF0250 protein YbeD"/>
    <property type="match status" value="1"/>
</dbReference>
<dbReference type="Gene3D" id="3.30.70.260">
    <property type="match status" value="1"/>
</dbReference>
<dbReference type="HAMAP" id="MF_00659">
    <property type="entry name" value="UPF0250"/>
    <property type="match status" value="1"/>
</dbReference>
<dbReference type="InterPro" id="IPR007454">
    <property type="entry name" value="UPF0250_YbeD-like"/>
</dbReference>
<dbReference type="InterPro" id="IPR027471">
    <property type="entry name" value="YbeD-like_sf"/>
</dbReference>
<dbReference type="NCBIfam" id="NF003447">
    <property type="entry name" value="PRK04998.1"/>
    <property type="match status" value="1"/>
</dbReference>
<dbReference type="PANTHER" id="PTHR38036">
    <property type="entry name" value="UPF0250 PROTEIN YBED"/>
    <property type="match status" value="1"/>
</dbReference>
<dbReference type="PANTHER" id="PTHR38036:SF1">
    <property type="entry name" value="UPF0250 PROTEIN YBED"/>
    <property type="match status" value="1"/>
</dbReference>
<dbReference type="Pfam" id="PF04359">
    <property type="entry name" value="DUF493"/>
    <property type="match status" value="1"/>
</dbReference>
<dbReference type="SUPFAM" id="SSF117991">
    <property type="entry name" value="YbeD/HP0495-like"/>
    <property type="match status" value="1"/>
</dbReference>
<feature type="chain" id="PRO_1000061912" description="UPF0250 protein YPN_1085">
    <location>
        <begin position="1"/>
        <end position="87"/>
    </location>
</feature>
<protein>
    <recommendedName>
        <fullName evidence="1">UPF0250 protein YPN_1085</fullName>
    </recommendedName>
</protein>
<comment type="similarity">
    <text evidence="1">Belongs to the UPF0250 family.</text>
</comment>
<sequence length="87" mass="9805">MKTKLNELLEFPCSFTYKVMGIAEPQLVDQVVEVVQRHAPGEYTPQVKPSSKGNYHSVSITITATHIDQVETLYEELGNLELVKMVL</sequence>
<accession>Q1CKR4</accession>
<accession>C4GR18</accession>
<evidence type="ECO:0000255" key="1">
    <source>
        <dbReference type="HAMAP-Rule" id="MF_00659"/>
    </source>
</evidence>
<gene>
    <name type="ordered locus">YPN_1085</name>
    <name type="ORF">YP516_1179</name>
</gene>
<reference key="1">
    <citation type="journal article" date="2006" name="J. Bacteriol.">
        <title>Complete genome sequence of Yersinia pestis strains Antiqua and Nepal516: evidence of gene reduction in an emerging pathogen.</title>
        <authorList>
            <person name="Chain P.S.G."/>
            <person name="Hu P."/>
            <person name="Malfatti S.A."/>
            <person name="Radnedge L."/>
            <person name="Larimer F."/>
            <person name="Vergez L.M."/>
            <person name="Worsham P."/>
            <person name="Chu M.C."/>
            <person name="Andersen G.L."/>
        </authorList>
    </citation>
    <scope>NUCLEOTIDE SEQUENCE [LARGE SCALE GENOMIC DNA]</scope>
    <source>
        <strain>Nepal516</strain>
    </source>
</reference>
<reference key="2">
    <citation type="submission" date="2009-04" db="EMBL/GenBank/DDBJ databases">
        <title>Yersinia pestis Nepal516A whole genome shotgun sequencing project.</title>
        <authorList>
            <person name="Plunkett G. III"/>
            <person name="Anderson B.D."/>
            <person name="Baumler D.J."/>
            <person name="Burland V."/>
            <person name="Cabot E.L."/>
            <person name="Glasner J.D."/>
            <person name="Mau B."/>
            <person name="Neeno-Eckwall E."/>
            <person name="Perna N.T."/>
            <person name="Munk A.C."/>
            <person name="Tapia R."/>
            <person name="Green L.D."/>
            <person name="Rogers Y.C."/>
            <person name="Detter J.C."/>
            <person name="Bruce D.C."/>
            <person name="Brettin T.S."/>
        </authorList>
    </citation>
    <scope>NUCLEOTIDE SEQUENCE [LARGE SCALE GENOMIC DNA]</scope>
    <source>
        <strain>Nepal516</strain>
    </source>
</reference>
<organism>
    <name type="scientific">Yersinia pestis bv. Antiqua (strain Nepal516)</name>
    <dbReference type="NCBI Taxonomy" id="377628"/>
    <lineage>
        <taxon>Bacteria</taxon>
        <taxon>Pseudomonadati</taxon>
        <taxon>Pseudomonadota</taxon>
        <taxon>Gammaproteobacteria</taxon>
        <taxon>Enterobacterales</taxon>
        <taxon>Yersiniaceae</taxon>
        <taxon>Yersinia</taxon>
    </lineage>
</organism>
<name>Y1085_YERPN</name>
<proteinExistence type="inferred from homology"/>